<reference key="1">
    <citation type="journal article" date="2006" name="J. Bacteriol.">
        <title>Complete genome sequence of the dehalorespiring bacterium Desulfitobacterium hafniense Y51 and comparison with Dehalococcoides ethenogenes 195.</title>
        <authorList>
            <person name="Nonaka H."/>
            <person name="Keresztes G."/>
            <person name="Shinoda Y."/>
            <person name="Ikenaga Y."/>
            <person name="Abe M."/>
            <person name="Naito K."/>
            <person name="Inatomi K."/>
            <person name="Furukawa K."/>
            <person name="Inui M."/>
            <person name="Yukawa H."/>
        </authorList>
    </citation>
    <scope>NUCLEOTIDE SEQUENCE [LARGE SCALE GENOMIC DNA]</scope>
    <source>
        <strain>Y51</strain>
    </source>
</reference>
<protein>
    <recommendedName>
        <fullName evidence="1">Large ribosomal subunit protein bL27</fullName>
    </recommendedName>
    <alternativeName>
        <fullName evidence="2">50S ribosomal protein L27</fullName>
    </alternativeName>
</protein>
<accession>Q24SN8</accession>
<comment type="similarity">
    <text evidence="1">Belongs to the bacterial ribosomal protein bL27 family.</text>
</comment>
<evidence type="ECO:0000255" key="1">
    <source>
        <dbReference type="HAMAP-Rule" id="MF_00539"/>
    </source>
</evidence>
<evidence type="ECO:0000305" key="2"/>
<gene>
    <name evidence="1" type="primary">rpmA</name>
    <name type="ordered locus">DSY3165</name>
</gene>
<organism>
    <name type="scientific">Desulfitobacterium hafniense (strain Y51)</name>
    <dbReference type="NCBI Taxonomy" id="138119"/>
    <lineage>
        <taxon>Bacteria</taxon>
        <taxon>Bacillati</taxon>
        <taxon>Bacillota</taxon>
        <taxon>Clostridia</taxon>
        <taxon>Eubacteriales</taxon>
        <taxon>Desulfitobacteriaceae</taxon>
        <taxon>Desulfitobacterium</taxon>
    </lineage>
</organism>
<sequence length="98" mass="10922">MLKMNLQLFAHKKGVGSSRNGRDSNAQRLGVKRGDGQFVTAGNIIVRQRGTKFHPGKNCGLGKDDTLFATIDGYVKFERKDRSRKQVSIYPERQAAQA</sequence>
<name>RL27_DESHY</name>
<feature type="chain" id="PRO_1000128735" description="Large ribosomal subunit protein bL27">
    <location>
        <begin position="1"/>
        <end position="98"/>
    </location>
</feature>
<dbReference type="EMBL" id="AP008230">
    <property type="protein sequence ID" value="BAE84954.1"/>
    <property type="molecule type" value="Genomic_DNA"/>
</dbReference>
<dbReference type="RefSeq" id="WP_005816541.1">
    <property type="nucleotide sequence ID" value="NC_007907.1"/>
</dbReference>
<dbReference type="SMR" id="Q24SN8"/>
<dbReference type="STRING" id="138119.DSY3165"/>
<dbReference type="KEGG" id="dsy:DSY3165"/>
<dbReference type="eggNOG" id="COG0211">
    <property type="taxonomic scope" value="Bacteria"/>
</dbReference>
<dbReference type="HOGENOM" id="CLU_095424_4_0_9"/>
<dbReference type="Proteomes" id="UP000001946">
    <property type="component" value="Chromosome"/>
</dbReference>
<dbReference type="GO" id="GO:0022625">
    <property type="term" value="C:cytosolic large ribosomal subunit"/>
    <property type="evidence" value="ECO:0007669"/>
    <property type="project" value="TreeGrafter"/>
</dbReference>
<dbReference type="GO" id="GO:0003735">
    <property type="term" value="F:structural constituent of ribosome"/>
    <property type="evidence" value="ECO:0007669"/>
    <property type="project" value="InterPro"/>
</dbReference>
<dbReference type="GO" id="GO:0006412">
    <property type="term" value="P:translation"/>
    <property type="evidence" value="ECO:0007669"/>
    <property type="project" value="UniProtKB-UniRule"/>
</dbReference>
<dbReference type="FunFam" id="2.40.50.100:FF:000004">
    <property type="entry name" value="50S ribosomal protein L27"/>
    <property type="match status" value="1"/>
</dbReference>
<dbReference type="Gene3D" id="2.40.50.100">
    <property type="match status" value="1"/>
</dbReference>
<dbReference type="HAMAP" id="MF_00539">
    <property type="entry name" value="Ribosomal_bL27"/>
    <property type="match status" value="1"/>
</dbReference>
<dbReference type="InterPro" id="IPR001684">
    <property type="entry name" value="Ribosomal_bL27"/>
</dbReference>
<dbReference type="InterPro" id="IPR018261">
    <property type="entry name" value="Ribosomal_bL27_CS"/>
</dbReference>
<dbReference type="NCBIfam" id="TIGR00062">
    <property type="entry name" value="L27"/>
    <property type="match status" value="1"/>
</dbReference>
<dbReference type="PANTHER" id="PTHR15893:SF0">
    <property type="entry name" value="LARGE RIBOSOMAL SUBUNIT PROTEIN BL27M"/>
    <property type="match status" value="1"/>
</dbReference>
<dbReference type="PANTHER" id="PTHR15893">
    <property type="entry name" value="RIBOSOMAL PROTEIN L27"/>
    <property type="match status" value="1"/>
</dbReference>
<dbReference type="Pfam" id="PF01016">
    <property type="entry name" value="Ribosomal_L27"/>
    <property type="match status" value="1"/>
</dbReference>
<dbReference type="PRINTS" id="PR00063">
    <property type="entry name" value="RIBOSOMALL27"/>
</dbReference>
<dbReference type="SUPFAM" id="SSF110324">
    <property type="entry name" value="Ribosomal L27 protein-like"/>
    <property type="match status" value="1"/>
</dbReference>
<dbReference type="PROSITE" id="PS00831">
    <property type="entry name" value="RIBOSOMAL_L27"/>
    <property type="match status" value="1"/>
</dbReference>
<proteinExistence type="inferred from homology"/>
<keyword id="KW-1185">Reference proteome</keyword>
<keyword id="KW-0687">Ribonucleoprotein</keyword>
<keyword id="KW-0689">Ribosomal protein</keyword>